<sequence>MADMPSGESCTSPLELFNSIAAQGELVRSLKAGNAPKDEIESAVKMLLSLKMNYKTAMGEEYKAGCPPGNSTAGSNGDPDATKASEDFVDPWTVRTSSAKGIDYDKLIVQFGSSKIDKELINRIERATGQRPHRFLRRGIFFSHRDMNQILDAYENKKPFYLYTGRGPSSEAMHLGHLVPFIFTKWLQDVFDVPLVIQMSDDEKYLWKDLTLEQAYSYTVENAKDIIACGFDVNKTFIFSDLEYMGQSPGFYKNVVKIQKHVTFNQVKGIFGFTDSDCIGKISFPAVQAAPSFSNSFPKIFRDRTDIQCLIPCAIDQDPYFRMTRDVAPRIGHPKPALLHSTFFPALQGAQTKMSASDPNSSIFLTDTAKQIKSKVNKHAFSGGRDTVEEHRQFGGNCEVDVSFMYLTFFLEDDDSLEQIRKDYTSGAMLTGELKKTLIDVLQPLIAEHQARRKAVTEETVKEFMAPRQLSFHFQCFCFDT</sequence>
<keyword id="KW-0030">Aminoacyl-tRNA synthetase</keyword>
<keyword id="KW-0037">Angiogenesis</keyword>
<keyword id="KW-0067">ATP-binding</keyword>
<keyword id="KW-0963">Cytoplasm</keyword>
<keyword id="KW-0903">Direct protein sequencing</keyword>
<keyword id="KW-0436">Ligase</keyword>
<keyword id="KW-0547">Nucleotide-binding</keyword>
<keyword id="KW-0597">Phosphoprotein</keyword>
<keyword id="KW-0648">Protein biosynthesis</keyword>
<keyword id="KW-1185">Reference proteome</keyword>
<protein>
    <recommendedName>
        <fullName evidence="2">Tryptophan--tRNA ligase, cytoplasmic</fullName>
        <ecNumber evidence="2">6.1.1.2</ecNumber>
    </recommendedName>
    <alternativeName>
        <fullName>Tryptophanyl-tRNA synthetase</fullName>
        <shortName>TrpRS</shortName>
    </alternativeName>
    <component>
        <recommendedName>
            <fullName>T1-TrpRS</fullName>
        </recommendedName>
    </component>
    <component>
        <recommendedName>
            <fullName>T2-TrpRS</fullName>
        </recommendedName>
    </component>
</protein>
<comment type="function">
    <text evidence="2">Catalyzes the attachment of tryptophan to tRNA(Trp) in a two-step reaction: tryptophan is first activated by ATP to form Trp-AMP and then transferred to the acceptor end of the tRNA(Trp). Could also possess an angiostatic activity.</text>
</comment>
<comment type="catalytic activity">
    <reaction evidence="2">
        <text>tRNA(Trp) + L-tryptophan + ATP = L-tryptophyl-tRNA(Trp) + AMP + diphosphate + H(+)</text>
        <dbReference type="Rhea" id="RHEA:24080"/>
        <dbReference type="Rhea" id="RHEA-COMP:9671"/>
        <dbReference type="Rhea" id="RHEA-COMP:9705"/>
        <dbReference type="ChEBI" id="CHEBI:15378"/>
        <dbReference type="ChEBI" id="CHEBI:30616"/>
        <dbReference type="ChEBI" id="CHEBI:33019"/>
        <dbReference type="ChEBI" id="CHEBI:57912"/>
        <dbReference type="ChEBI" id="CHEBI:78442"/>
        <dbReference type="ChEBI" id="CHEBI:78535"/>
        <dbReference type="ChEBI" id="CHEBI:456215"/>
        <dbReference type="EC" id="6.1.1.2"/>
    </reaction>
    <physiologicalReaction direction="left-to-right" evidence="2">
        <dbReference type="Rhea" id="RHEA:24081"/>
    </physiologicalReaction>
</comment>
<comment type="subunit">
    <text evidence="2">Homodimer (By similarity). Interacts with oxidized form of GAPDH (By similarity).</text>
</comment>
<comment type="subcellular location">
    <subcellularLocation>
        <location evidence="2">Cytoplasm</location>
    </subcellularLocation>
</comment>
<comment type="PTM">
    <text evidence="2">Proteolytic cleavage generates 2 forms; T1-TrpRS and T2-TrpRS.</text>
</comment>
<comment type="similarity">
    <text evidence="6">Belongs to the class-I aminoacyl-tRNA synthetase family.</text>
</comment>
<comment type="sequence caution" evidence="6">
    <conflict type="erroneous initiation">
        <sequence resource="EMBL-CDS" id="AAH61752"/>
    </conflict>
    <text>Truncated N-terminus.</text>
</comment>
<proteinExistence type="evidence at protein level"/>
<evidence type="ECO:0000250" key="1"/>
<evidence type="ECO:0000250" key="2">
    <source>
        <dbReference type="UniProtKB" id="P23381"/>
    </source>
</evidence>
<evidence type="ECO:0000250" key="3">
    <source>
        <dbReference type="UniProtKB" id="P32921"/>
    </source>
</evidence>
<evidence type="ECO:0000255" key="4">
    <source>
        <dbReference type="PROSITE-ProRule" id="PRU00531"/>
    </source>
</evidence>
<evidence type="ECO:0000256" key="5">
    <source>
        <dbReference type="SAM" id="MobiDB-lite"/>
    </source>
</evidence>
<evidence type="ECO:0000305" key="6"/>
<evidence type="ECO:0000312" key="7">
    <source>
        <dbReference type="RGD" id="1308278"/>
    </source>
</evidence>
<dbReference type="EC" id="6.1.1.2" evidence="2"/>
<dbReference type="EMBL" id="AY724504">
    <property type="status" value="NOT_ANNOTATED_CDS"/>
    <property type="molecule type" value="mRNA"/>
</dbReference>
<dbReference type="EMBL" id="BC061752">
    <property type="protein sequence ID" value="AAH61752.1"/>
    <property type="status" value="ALT_INIT"/>
    <property type="molecule type" value="mRNA"/>
</dbReference>
<dbReference type="EMBL" id="BG376398">
    <property type="status" value="NOT_ANNOTATED_CDS"/>
    <property type="molecule type" value="mRNA"/>
</dbReference>
<dbReference type="RefSeq" id="XP_006240604.1">
    <property type="nucleotide sequence ID" value="XM_006240542.3"/>
</dbReference>
<dbReference type="RefSeq" id="XP_008763034.1">
    <property type="nucleotide sequence ID" value="XM_008764812.2"/>
</dbReference>
<dbReference type="SMR" id="Q6P7B0"/>
<dbReference type="BioGRID" id="260721">
    <property type="interactions" value="6"/>
</dbReference>
<dbReference type="FunCoup" id="Q6P7B0">
    <property type="interactions" value="3718"/>
</dbReference>
<dbReference type="IntAct" id="Q6P7B0">
    <property type="interactions" value="3"/>
</dbReference>
<dbReference type="MINT" id="Q6P7B0"/>
<dbReference type="STRING" id="10116.ENSRNOP00000006128"/>
<dbReference type="GlyGen" id="Q6P7B0">
    <property type="glycosylation" value="1 site, 1 O-linked glycan (1 site)"/>
</dbReference>
<dbReference type="iPTMnet" id="Q6P7B0"/>
<dbReference type="PhosphoSitePlus" id="Q6P7B0"/>
<dbReference type="jPOST" id="Q6P7B0"/>
<dbReference type="PaxDb" id="10116-ENSRNOP00000006128"/>
<dbReference type="Ensembl" id="ENSRNOT00000006128.6">
    <property type="protein sequence ID" value="ENSRNOP00000006128.3"/>
    <property type="gene ID" value="ENSRNOG00000004359.8"/>
</dbReference>
<dbReference type="UCSC" id="RGD:1308278">
    <property type="organism name" value="rat"/>
</dbReference>
<dbReference type="AGR" id="RGD:1308278"/>
<dbReference type="RGD" id="1308278">
    <property type="gene designation" value="Wars1"/>
</dbReference>
<dbReference type="eggNOG" id="KOG2145">
    <property type="taxonomic scope" value="Eukaryota"/>
</dbReference>
<dbReference type="GeneTree" id="ENSGT00940000153724"/>
<dbReference type="InParanoid" id="Q6P7B0"/>
<dbReference type="OMA" id="SIYHRFM"/>
<dbReference type="OrthoDB" id="10261385at2759"/>
<dbReference type="PhylomeDB" id="Q6P7B0"/>
<dbReference type="TreeFam" id="TF105669"/>
<dbReference type="PRO" id="PR:Q6P7B0"/>
<dbReference type="Proteomes" id="UP000002494">
    <property type="component" value="Chromosome 6"/>
</dbReference>
<dbReference type="Bgee" id="ENSRNOG00000004359">
    <property type="expression patterns" value="Expressed in pancreas and 19 other cell types or tissues"/>
</dbReference>
<dbReference type="ExpressionAtlas" id="Q6P7B0">
    <property type="expression patterns" value="baseline and differential"/>
</dbReference>
<dbReference type="GO" id="GO:0005737">
    <property type="term" value="C:cytoplasm"/>
    <property type="evidence" value="ECO:0000318"/>
    <property type="project" value="GO_Central"/>
</dbReference>
<dbReference type="GO" id="GO:0005829">
    <property type="term" value="C:cytosol"/>
    <property type="evidence" value="ECO:0007669"/>
    <property type="project" value="Ensembl"/>
</dbReference>
<dbReference type="GO" id="GO:0005634">
    <property type="term" value="C:nucleus"/>
    <property type="evidence" value="ECO:0000266"/>
    <property type="project" value="RGD"/>
</dbReference>
<dbReference type="GO" id="GO:0032991">
    <property type="term" value="C:protein-containing complex"/>
    <property type="evidence" value="ECO:0000266"/>
    <property type="project" value="RGD"/>
</dbReference>
<dbReference type="GO" id="GO:0005524">
    <property type="term" value="F:ATP binding"/>
    <property type="evidence" value="ECO:0007669"/>
    <property type="project" value="UniProtKB-KW"/>
</dbReference>
<dbReference type="GO" id="GO:0019210">
    <property type="term" value="F:kinase inhibitor activity"/>
    <property type="evidence" value="ECO:0000266"/>
    <property type="project" value="RGD"/>
</dbReference>
<dbReference type="GO" id="GO:0019904">
    <property type="term" value="F:protein domain specific binding"/>
    <property type="evidence" value="ECO:0000266"/>
    <property type="project" value="RGD"/>
</dbReference>
<dbReference type="GO" id="GO:0042803">
    <property type="term" value="F:protein homodimerization activity"/>
    <property type="evidence" value="ECO:0000250"/>
    <property type="project" value="UniProtKB"/>
</dbReference>
<dbReference type="GO" id="GO:0019901">
    <property type="term" value="F:protein kinase binding"/>
    <property type="evidence" value="ECO:0000266"/>
    <property type="project" value="RGD"/>
</dbReference>
<dbReference type="GO" id="GO:0004830">
    <property type="term" value="F:tryptophan-tRNA ligase activity"/>
    <property type="evidence" value="ECO:0000250"/>
    <property type="project" value="UniProtKB"/>
</dbReference>
<dbReference type="GO" id="GO:0001525">
    <property type="term" value="P:angiogenesis"/>
    <property type="evidence" value="ECO:0007669"/>
    <property type="project" value="UniProtKB-KW"/>
</dbReference>
<dbReference type="GO" id="GO:0010628">
    <property type="term" value="P:positive regulation of gene expression"/>
    <property type="evidence" value="ECO:0000266"/>
    <property type="project" value="RGD"/>
</dbReference>
<dbReference type="GO" id="GO:0031334">
    <property type="term" value="P:positive regulation of protein-containing complex assembly"/>
    <property type="evidence" value="ECO:0000266"/>
    <property type="project" value="RGD"/>
</dbReference>
<dbReference type="GO" id="GO:0045765">
    <property type="term" value="P:regulation of angiogenesis"/>
    <property type="evidence" value="ECO:0000266"/>
    <property type="project" value="RGD"/>
</dbReference>
<dbReference type="GO" id="GO:0006436">
    <property type="term" value="P:tryptophanyl-tRNA aminoacylation"/>
    <property type="evidence" value="ECO:0000266"/>
    <property type="project" value="RGD"/>
</dbReference>
<dbReference type="CDD" id="cd00806">
    <property type="entry name" value="TrpRS_core"/>
    <property type="match status" value="1"/>
</dbReference>
<dbReference type="CDD" id="cd00936">
    <property type="entry name" value="WEPRS_RNA"/>
    <property type="match status" value="1"/>
</dbReference>
<dbReference type="FunFam" id="1.10.287.10:FF:000006">
    <property type="entry name" value="Bifunctional glutamate/proline--tRNA ligase"/>
    <property type="match status" value="1"/>
</dbReference>
<dbReference type="FunFam" id="1.10.240.10:FF:000003">
    <property type="entry name" value="Tryptophan--tRNA ligase, cytoplasmic"/>
    <property type="match status" value="1"/>
</dbReference>
<dbReference type="FunFam" id="3.40.50.620:FF:000454">
    <property type="entry name" value="Tryptophan--tRNA ligase, cytoplasmic"/>
    <property type="match status" value="1"/>
</dbReference>
<dbReference type="Gene3D" id="3.40.50.620">
    <property type="entry name" value="HUPs"/>
    <property type="match status" value="1"/>
</dbReference>
<dbReference type="Gene3D" id="1.10.287.10">
    <property type="entry name" value="S15/NS1, RNA-binding"/>
    <property type="match status" value="1"/>
</dbReference>
<dbReference type="Gene3D" id="1.10.240.10">
    <property type="entry name" value="Tyrosyl-Transfer RNA Synthetase"/>
    <property type="match status" value="1"/>
</dbReference>
<dbReference type="InterPro" id="IPR001412">
    <property type="entry name" value="aa-tRNA-synth_I_CS"/>
</dbReference>
<dbReference type="InterPro" id="IPR002305">
    <property type="entry name" value="aa-tRNA-synth_Ic"/>
</dbReference>
<dbReference type="InterPro" id="IPR014729">
    <property type="entry name" value="Rossmann-like_a/b/a_fold"/>
</dbReference>
<dbReference type="InterPro" id="IPR002306">
    <property type="entry name" value="Trp-tRNA-ligase"/>
</dbReference>
<dbReference type="InterPro" id="IPR009068">
    <property type="entry name" value="uS15_NS1_RNA-bd_sf"/>
</dbReference>
<dbReference type="InterPro" id="IPR000738">
    <property type="entry name" value="WHEP-TRS_dom"/>
</dbReference>
<dbReference type="NCBIfam" id="TIGR00233">
    <property type="entry name" value="trpS"/>
    <property type="match status" value="1"/>
</dbReference>
<dbReference type="PANTHER" id="PTHR10055:SF1">
    <property type="entry name" value="TRYPTOPHAN--TRNA LIGASE, CYTOPLASMIC"/>
    <property type="match status" value="1"/>
</dbReference>
<dbReference type="PANTHER" id="PTHR10055">
    <property type="entry name" value="TRYPTOPHANYL-TRNA SYNTHETASE"/>
    <property type="match status" value="1"/>
</dbReference>
<dbReference type="Pfam" id="PF00579">
    <property type="entry name" value="tRNA-synt_1b"/>
    <property type="match status" value="1"/>
</dbReference>
<dbReference type="Pfam" id="PF00458">
    <property type="entry name" value="WHEP-TRS"/>
    <property type="match status" value="1"/>
</dbReference>
<dbReference type="PRINTS" id="PR01039">
    <property type="entry name" value="TRNASYNTHTRP"/>
</dbReference>
<dbReference type="SMART" id="SM00991">
    <property type="entry name" value="WHEP-TRS"/>
    <property type="match status" value="1"/>
</dbReference>
<dbReference type="SUPFAM" id="SSF52374">
    <property type="entry name" value="Nucleotidylyl transferase"/>
    <property type="match status" value="1"/>
</dbReference>
<dbReference type="SUPFAM" id="SSF47060">
    <property type="entry name" value="S15/NS1 RNA-binding domain"/>
    <property type="match status" value="1"/>
</dbReference>
<dbReference type="PROSITE" id="PS00178">
    <property type="entry name" value="AA_TRNA_LIGASE_I"/>
    <property type="match status" value="1"/>
</dbReference>
<dbReference type="PROSITE" id="PS00762">
    <property type="entry name" value="WHEP_TRS_1"/>
    <property type="match status" value="1"/>
</dbReference>
<dbReference type="PROSITE" id="PS51185">
    <property type="entry name" value="WHEP_TRS_2"/>
    <property type="match status" value="1"/>
</dbReference>
<feature type="chain" id="PRO_0000274190" description="Tryptophan--tRNA ligase, cytoplasmic">
    <location>
        <begin position="1"/>
        <end position="481"/>
    </location>
</feature>
<feature type="chain" id="PRO_0000386469" description="T1-TrpRS" evidence="1">
    <location>
        <begin position="75"/>
        <end position="481"/>
    </location>
</feature>
<feature type="chain" id="PRO_0000386470" description="T2-TrpRS" evidence="1">
    <location>
        <begin position="98"/>
        <end position="481"/>
    </location>
</feature>
<feature type="domain" description="WHEP-TRS" evidence="4">
    <location>
        <begin position="12"/>
        <end position="68"/>
    </location>
</feature>
<feature type="region of interest" description="Disordered" evidence="5">
    <location>
        <begin position="65"/>
        <end position="85"/>
    </location>
</feature>
<feature type="short sequence motif" description="'HIGH' region">
    <location>
        <begin position="168"/>
        <end position="177"/>
    </location>
</feature>
<feature type="short sequence motif" description="'KMSKS' region">
    <location>
        <begin position="353"/>
        <end position="357"/>
    </location>
</feature>
<feature type="modified residue" description="N6-succinyllysine" evidence="3">
    <location>
        <position position="158"/>
    </location>
</feature>
<feature type="modified residue" description="Phosphoserine" evidence="2">
    <location>
        <position position="355"/>
    </location>
</feature>
<feature type="sequence conflict" description="In Ref. 1; AY724504." evidence="6" ref="1">
    <original>R</original>
    <variation>S</variation>
    <location>
        <position position="385"/>
    </location>
</feature>
<feature type="sequence conflict" description="In Ref. 2; AAH61752." evidence="6" ref="2">
    <original>DY</original>
    <variation>VS</variation>
    <location>
        <begin position="423"/>
        <end position="424"/>
    </location>
</feature>
<organism>
    <name type="scientific">Rattus norvegicus</name>
    <name type="common">Rat</name>
    <dbReference type="NCBI Taxonomy" id="10116"/>
    <lineage>
        <taxon>Eukaryota</taxon>
        <taxon>Metazoa</taxon>
        <taxon>Chordata</taxon>
        <taxon>Craniata</taxon>
        <taxon>Vertebrata</taxon>
        <taxon>Euteleostomi</taxon>
        <taxon>Mammalia</taxon>
        <taxon>Eutheria</taxon>
        <taxon>Euarchontoglires</taxon>
        <taxon>Glires</taxon>
        <taxon>Rodentia</taxon>
        <taxon>Myomorpha</taxon>
        <taxon>Muroidea</taxon>
        <taxon>Muridae</taxon>
        <taxon>Murinae</taxon>
        <taxon>Rattus</taxon>
    </lineage>
</organism>
<name>SYWC_RAT</name>
<reference key="1">
    <citation type="submission" date="2004-08" db="EMBL/GenBank/DDBJ databases">
        <authorList>
            <person name="Soares M.B."/>
            <person name="Casavant T.L."/>
            <person name="Sheffield V.C."/>
            <person name="Bonaldo M.F."/>
            <person name="Bair T.B."/>
            <person name="Scheetz T.E."/>
            <person name="Snir E."/>
            <person name="Akabogu I."/>
            <person name="Bair J.L."/>
            <person name="Berger B."/>
            <person name="Crouch K."/>
            <person name="Davis A."/>
            <person name="Eystone M.E."/>
            <person name="Keppel C."/>
            <person name="Kucaba T.A."/>
            <person name="Lebeck M."/>
            <person name="Lin J.L."/>
            <person name="de Melo A.I.R."/>
            <person name="Rehmann J."/>
            <person name="Reiter R.S."/>
            <person name="Schaefer K."/>
            <person name="Smith C."/>
            <person name="Tack D."/>
            <person name="Trout K."/>
            <person name="Lin J.J.-C."/>
        </authorList>
    </citation>
    <scope>NUCLEOTIDE SEQUENCE [MRNA] OF 1-473</scope>
</reference>
<reference key="2">
    <citation type="journal article" date="2004" name="Genome Res.">
        <title>The status, quality, and expansion of the NIH full-length cDNA project: the Mammalian Gene Collection (MGC).</title>
        <authorList>
            <consortium name="The MGC Project Team"/>
        </authorList>
    </citation>
    <scope>NUCLEOTIDE SEQUENCE [LARGE SCALE MRNA] OF 38-424</scope>
    <source>
        <tissue>Prostate</tissue>
    </source>
</reference>
<reference key="3">
    <citation type="journal article" date="1996" name="Genome Res.">
        <title>Normalization and subtraction: two approaches to facilitate gene discovery.</title>
        <authorList>
            <person name="Bonaldo M.F."/>
            <person name="Lennon G."/>
            <person name="Soares M.B."/>
        </authorList>
    </citation>
    <scope>NUCLEOTIDE SEQUENCE [LARGE SCALE MRNA] OF 429-481</scope>
</reference>
<reference key="4">
    <citation type="submission" date="2006-11" db="UniProtKB">
        <authorList>
            <person name="Lubec G."/>
            <person name="Afjehi-Sadat L."/>
        </authorList>
    </citation>
    <scope>PROTEIN SEQUENCE OF 269-299 AND 331-353</scope>
    <scope>IDENTIFICATION BY MASS SPECTROMETRY</scope>
    <source>
        <strain>Sprague-Dawley</strain>
        <tissue>Spinal cord</tissue>
    </source>
</reference>
<accession>Q6P7B0</accession>
<gene>
    <name evidence="7" type="primary">Wars1</name>
    <name type="synonym">Wars</name>
</gene>